<organism>
    <name type="scientific">Nicotiana tabacum</name>
    <name type="common">Common tobacco</name>
    <dbReference type="NCBI Taxonomy" id="4097"/>
    <lineage>
        <taxon>Eukaryota</taxon>
        <taxon>Viridiplantae</taxon>
        <taxon>Streptophyta</taxon>
        <taxon>Embryophyta</taxon>
        <taxon>Tracheophyta</taxon>
        <taxon>Spermatophyta</taxon>
        <taxon>Magnoliopsida</taxon>
        <taxon>eudicotyledons</taxon>
        <taxon>Gunneridae</taxon>
        <taxon>Pentapetalae</taxon>
        <taxon>asterids</taxon>
        <taxon>lamiids</taxon>
        <taxon>Solanales</taxon>
        <taxon>Solanaceae</taxon>
        <taxon>Nicotianoideae</taxon>
        <taxon>Nicotianeae</taxon>
        <taxon>Nicotiana</taxon>
    </lineage>
</organism>
<comment type="function">
    <text evidence="1">This protein binds directly to 23S ribosomal RNA.</text>
</comment>
<comment type="subunit">
    <text evidence="1">Part of the 50S ribosomal subunit.</text>
</comment>
<comment type="subcellular location">
    <subcellularLocation>
        <location>Plastid</location>
        <location>Chloroplast</location>
    </subcellularLocation>
</comment>
<comment type="similarity">
    <text evidence="2">Belongs to the bacterial ribosomal protein bL17 family.</text>
</comment>
<keyword id="KW-0150">Chloroplast</keyword>
<keyword id="KW-0934">Plastid</keyword>
<keyword id="KW-1185">Reference proteome</keyword>
<keyword id="KW-0687">Ribonucleoprotein</keyword>
<keyword id="KW-0689">Ribosomal protein</keyword>
<keyword id="KW-0694">RNA-binding</keyword>
<keyword id="KW-0699">rRNA-binding</keyword>
<keyword id="KW-0809">Transit peptide</keyword>
<accession>O80363</accession>
<reference key="1">
    <citation type="submission" date="1998-01" db="EMBL/GenBank/DDBJ databases">
        <title>Tobacco chloroplast ribosomal protein L17.</title>
        <authorList>
            <person name="Yokoi F."/>
            <person name="Ohta M."/>
            <person name="Sugiura M."/>
        </authorList>
    </citation>
    <scope>NUCLEOTIDE SEQUENCE [MRNA]</scope>
    <source>
        <strain>cv. Bright Yellow 4</strain>
        <tissue>Leaf</tissue>
    </source>
</reference>
<feature type="transit peptide" description="Chloroplast" evidence="1">
    <location>
        <begin position="1"/>
        <end position="89"/>
    </location>
</feature>
<feature type="chain" id="PRO_0000249232" description="Large ribosomal subunit protein bL17c">
    <location>
        <begin position="90"/>
        <end position="205"/>
    </location>
</feature>
<evidence type="ECO:0000250" key="1"/>
<evidence type="ECO:0000305" key="2"/>
<proteinExistence type="evidence at transcript level"/>
<protein>
    <recommendedName>
        <fullName evidence="2">Large ribosomal subunit protein bL17c</fullName>
    </recommendedName>
    <alternativeName>
        <fullName>50S ribosomal protein L17, chloroplastic</fullName>
    </alternativeName>
    <alternativeName>
        <fullName>CL17</fullName>
    </alternativeName>
</protein>
<gene>
    <name type="primary">RPL17</name>
</gene>
<name>RK17_TOBAC</name>
<sequence>MASASTTWSMSCLKSALPSIQPISSSSLRFSCGPSPSRLRICKPKSSSRLLHSFVGLAPLHPLLSLSSQDSTSFEHSFTVIDNGGRVFAMRHGRKVPKLNRPPDQRRALLRGLTTQLLKHGRIKTTKARARAVRKYVDKMITMAKDGSLHKRRQALGFIYEKQIVHALFAEVPDRYGERNGGYTRIIRTLPRRGDNAPMAYIELV</sequence>
<dbReference type="EMBL" id="AB010880">
    <property type="protein sequence ID" value="BAA31512.1"/>
    <property type="molecule type" value="mRNA"/>
</dbReference>
<dbReference type="PIR" id="T01744">
    <property type="entry name" value="T01744"/>
</dbReference>
<dbReference type="RefSeq" id="NP_001313010.1">
    <property type="nucleotide sequence ID" value="NM_001326081.1"/>
</dbReference>
<dbReference type="SMR" id="O80363"/>
<dbReference type="STRING" id="4097.O80363"/>
<dbReference type="PaxDb" id="4097-O80363"/>
<dbReference type="GeneID" id="107821645"/>
<dbReference type="KEGG" id="nta:107821645"/>
<dbReference type="OMA" id="WQSFENG"/>
<dbReference type="OrthoDB" id="275000at2759"/>
<dbReference type="PhylomeDB" id="O80363"/>
<dbReference type="Proteomes" id="UP000084051">
    <property type="component" value="Unplaced"/>
</dbReference>
<dbReference type="GO" id="GO:0009507">
    <property type="term" value="C:chloroplast"/>
    <property type="evidence" value="ECO:0007669"/>
    <property type="project" value="UniProtKB-SubCell"/>
</dbReference>
<dbReference type="GO" id="GO:0022625">
    <property type="term" value="C:cytosolic large ribosomal subunit"/>
    <property type="evidence" value="ECO:0000318"/>
    <property type="project" value="GO_Central"/>
</dbReference>
<dbReference type="GO" id="GO:0019843">
    <property type="term" value="F:rRNA binding"/>
    <property type="evidence" value="ECO:0007669"/>
    <property type="project" value="UniProtKB-KW"/>
</dbReference>
<dbReference type="GO" id="GO:0003735">
    <property type="term" value="F:structural constituent of ribosome"/>
    <property type="evidence" value="ECO:0000318"/>
    <property type="project" value="GO_Central"/>
</dbReference>
<dbReference type="GO" id="GO:0006412">
    <property type="term" value="P:translation"/>
    <property type="evidence" value="ECO:0007669"/>
    <property type="project" value="InterPro"/>
</dbReference>
<dbReference type="FunFam" id="3.90.1030.10:FF:000001">
    <property type="entry name" value="50S ribosomal protein L17"/>
    <property type="match status" value="1"/>
</dbReference>
<dbReference type="Gene3D" id="3.90.1030.10">
    <property type="entry name" value="Ribosomal protein L17"/>
    <property type="match status" value="1"/>
</dbReference>
<dbReference type="HAMAP" id="MF_01368">
    <property type="entry name" value="Ribosomal_bL17"/>
    <property type="match status" value="1"/>
</dbReference>
<dbReference type="InterPro" id="IPR000456">
    <property type="entry name" value="Ribosomal_bL17"/>
</dbReference>
<dbReference type="InterPro" id="IPR047859">
    <property type="entry name" value="Ribosomal_bL17_CS"/>
</dbReference>
<dbReference type="InterPro" id="IPR036373">
    <property type="entry name" value="Ribosomal_bL17_sf"/>
</dbReference>
<dbReference type="NCBIfam" id="TIGR00059">
    <property type="entry name" value="L17"/>
    <property type="match status" value="1"/>
</dbReference>
<dbReference type="PANTHER" id="PTHR14413:SF16">
    <property type="entry name" value="LARGE RIBOSOMAL SUBUNIT PROTEIN BL17M"/>
    <property type="match status" value="1"/>
</dbReference>
<dbReference type="PANTHER" id="PTHR14413">
    <property type="entry name" value="RIBOSOMAL PROTEIN L17"/>
    <property type="match status" value="1"/>
</dbReference>
<dbReference type="Pfam" id="PF01196">
    <property type="entry name" value="Ribosomal_L17"/>
    <property type="match status" value="1"/>
</dbReference>
<dbReference type="SUPFAM" id="SSF64263">
    <property type="entry name" value="Prokaryotic ribosomal protein L17"/>
    <property type="match status" value="1"/>
</dbReference>
<dbReference type="PROSITE" id="PS01167">
    <property type="entry name" value="RIBOSOMAL_L17"/>
    <property type="match status" value="1"/>
</dbReference>